<keyword id="KW-0963">Cytoplasm</keyword>
<keyword id="KW-1185">Reference proteome</keyword>
<keyword id="KW-0704">Schiff base</keyword>
<keyword id="KW-0784">Thiamine biosynthesis</keyword>
<keyword id="KW-0808">Transferase</keyword>
<accession>A7MQQ2</accession>
<comment type="function">
    <text evidence="1">Catalyzes the rearrangement of 1-deoxy-D-xylulose 5-phosphate (DXP) to produce the thiazole phosphate moiety of thiamine. Sulfur is provided by the thiocarboxylate moiety of the carrier protein ThiS. In vitro, sulfur can be provided by H(2)S.</text>
</comment>
<comment type="catalytic activity">
    <reaction evidence="1">
        <text>[ThiS sulfur-carrier protein]-C-terminal-Gly-aminoethanethioate + 2-iminoacetate + 1-deoxy-D-xylulose 5-phosphate = [ThiS sulfur-carrier protein]-C-terminal Gly-Gly + 2-[(2R,5Z)-2-carboxy-4-methylthiazol-5(2H)-ylidene]ethyl phosphate + 2 H2O + H(+)</text>
        <dbReference type="Rhea" id="RHEA:26297"/>
        <dbReference type="Rhea" id="RHEA-COMP:12909"/>
        <dbReference type="Rhea" id="RHEA-COMP:19908"/>
        <dbReference type="ChEBI" id="CHEBI:15377"/>
        <dbReference type="ChEBI" id="CHEBI:15378"/>
        <dbReference type="ChEBI" id="CHEBI:57792"/>
        <dbReference type="ChEBI" id="CHEBI:62899"/>
        <dbReference type="ChEBI" id="CHEBI:77846"/>
        <dbReference type="ChEBI" id="CHEBI:90778"/>
        <dbReference type="ChEBI" id="CHEBI:232372"/>
        <dbReference type="EC" id="2.8.1.10"/>
    </reaction>
</comment>
<comment type="pathway">
    <text evidence="1">Cofactor biosynthesis; thiamine diphosphate biosynthesis.</text>
</comment>
<comment type="subunit">
    <text evidence="1">Homotetramer. Forms heterodimers with either ThiH or ThiS.</text>
</comment>
<comment type="subcellular location">
    <subcellularLocation>
        <location evidence="1">Cytoplasm</location>
    </subcellularLocation>
</comment>
<comment type="similarity">
    <text evidence="1">Belongs to the ThiG family.</text>
</comment>
<organism>
    <name type="scientific">Cronobacter sakazakii (strain ATCC BAA-894)</name>
    <name type="common">Enterobacter sakazakii</name>
    <dbReference type="NCBI Taxonomy" id="290339"/>
    <lineage>
        <taxon>Bacteria</taxon>
        <taxon>Pseudomonadati</taxon>
        <taxon>Pseudomonadota</taxon>
        <taxon>Gammaproteobacteria</taxon>
        <taxon>Enterobacterales</taxon>
        <taxon>Enterobacteriaceae</taxon>
        <taxon>Cronobacter</taxon>
    </lineage>
</organism>
<proteinExistence type="inferred from homology"/>
<dbReference type="EC" id="2.8.1.10" evidence="1"/>
<dbReference type="EMBL" id="CP000783">
    <property type="protein sequence ID" value="ABU78887.1"/>
    <property type="molecule type" value="Genomic_DNA"/>
</dbReference>
<dbReference type="RefSeq" id="WP_012126011.1">
    <property type="nucleotide sequence ID" value="NC_009778.1"/>
</dbReference>
<dbReference type="SMR" id="A7MQQ2"/>
<dbReference type="KEGG" id="esa:ESA_03683"/>
<dbReference type="PATRIC" id="fig|290339.8.peg.3280"/>
<dbReference type="HOGENOM" id="CLU_062233_1_0_6"/>
<dbReference type="UniPathway" id="UPA00060"/>
<dbReference type="Proteomes" id="UP000000260">
    <property type="component" value="Chromosome"/>
</dbReference>
<dbReference type="GO" id="GO:0005737">
    <property type="term" value="C:cytoplasm"/>
    <property type="evidence" value="ECO:0007669"/>
    <property type="project" value="UniProtKB-SubCell"/>
</dbReference>
<dbReference type="GO" id="GO:1990107">
    <property type="term" value="F:thiazole synthase activity"/>
    <property type="evidence" value="ECO:0007669"/>
    <property type="project" value="UniProtKB-EC"/>
</dbReference>
<dbReference type="GO" id="GO:0009229">
    <property type="term" value="P:thiamine diphosphate biosynthetic process"/>
    <property type="evidence" value="ECO:0007669"/>
    <property type="project" value="UniProtKB-UniRule"/>
</dbReference>
<dbReference type="CDD" id="cd04728">
    <property type="entry name" value="ThiG"/>
    <property type="match status" value="1"/>
</dbReference>
<dbReference type="FunFam" id="3.20.20.70:FF:000049">
    <property type="entry name" value="Thiazole synthase"/>
    <property type="match status" value="1"/>
</dbReference>
<dbReference type="Gene3D" id="3.20.20.70">
    <property type="entry name" value="Aldolase class I"/>
    <property type="match status" value="1"/>
</dbReference>
<dbReference type="HAMAP" id="MF_00443">
    <property type="entry name" value="ThiG"/>
    <property type="match status" value="1"/>
</dbReference>
<dbReference type="InterPro" id="IPR013785">
    <property type="entry name" value="Aldolase_TIM"/>
</dbReference>
<dbReference type="InterPro" id="IPR033983">
    <property type="entry name" value="Thiazole_synthase_ThiG"/>
</dbReference>
<dbReference type="InterPro" id="IPR008867">
    <property type="entry name" value="ThiG"/>
</dbReference>
<dbReference type="PANTHER" id="PTHR34266">
    <property type="entry name" value="THIAZOLE SYNTHASE"/>
    <property type="match status" value="1"/>
</dbReference>
<dbReference type="PANTHER" id="PTHR34266:SF2">
    <property type="entry name" value="THIAZOLE SYNTHASE"/>
    <property type="match status" value="1"/>
</dbReference>
<dbReference type="Pfam" id="PF05690">
    <property type="entry name" value="ThiG"/>
    <property type="match status" value="1"/>
</dbReference>
<dbReference type="SUPFAM" id="SSF110399">
    <property type="entry name" value="ThiG-like"/>
    <property type="match status" value="1"/>
</dbReference>
<protein>
    <recommendedName>
        <fullName evidence="1">Thiazole synthase</fullName>
        <ecNumber evidence="1">2.8.1.10</ecNumber>
    </recommendedName>
</protein>
<reference key="1">
    <citation type="journal article" date="2010" name="PLoS ONE">
        <title>Genome sequence of Cronobacter sakazakii BAA-894 and comparative genomic hybridization analysis with other Cronobacter species.</title>
        <authorList>
            <person name="Kucerova E."/>
            <person name="Clifton S.W."/>
            <person name="Xia X.Q."/>
            <person name="Long F."/>
            <person name="Porwollik S."/>
            <person name="Fulton L."/>
            <person name="Fronick C."/>
            <person name="Minx P."/>
            <person name="Kyung K."/>
            <person name="Warren W."/>
            <person name="Fulton R."/>
            <person name="Feng D."/>
            <person name="Wollam A."/>
            <person name="Shah N."/>
            <person name="Bhonagiri V."/>
            <person name="Nash W.E."/>
            <person name="Hallsworth-Pepin K."/>
            <person name="Wilson R.K."/>
            <person name="McClelland M."/>
            <person name="Forsythe S.J."/>
        </authorList>
    </citation>
    <scope>NUCLEOTIDE SEQUENCE [LARGE SCALE GENOMIC DNA]</scope>
    <source>
        <strain>ATCC BAA-894</strain>
    </source>
</reference>
<feature type="chain" id="PRO_1000026007" description="Thiazole synthase">
    <location>
        <begin position="1"/>
        <end position="256"/>
    </location>
</feature>
<feature type="active site" description="Schiff-base intermediate with DXP" evidence="1">
    <location>
        <position position="95"/>
    </location>
</feature>
<feature type="binding site" evidence="1">
    <location>
        <position position="156"/>
    </location>
    <ligand>
        <name>1-deoxy-D-xylulose 5-phosphate</name>
        <dbReference type="ChEBI" id="CHEBI:57792"/>
    </ligand>
</feature>
<feature type="binding site" evidence="1">
    <location>
        <begin position="182"/>
        <end position="183"/>
    </location>
    <ligand>
        <name>1-deoxy-D-xylulose 5-phosphate</name>
        <dbReference type="ChEBI" id="CHEBI:57792"/>
    </ligand>
</feature>
<feature type="binding site" evidence="1">
    <location>
        <begin position="204"/>
        <end position="205"/>
    </location>
    <ligand>
        <name>1-deoxy-D-xylulose 5-phosphate</name>
        <dbReference type="ChEBI" id="CHEBI:57792"/>
    </ligand>
</feature>
<sequence length="256" mass="26794">MLRIADKTFQSRLFTGTGKFASSSLMLEAIRESGSEMATLAMKRVDLLRRDDALLAPLQASGVALLPNTSGAKTAEEAVFAAQLAREALGTHWIKLEIHPDARWLLPDPIETLRAAEKLVAQGFVVLPYCGADPVLCKRLEEAGCAAVMPLGAPIGSNQGLQTRALLEIIIAQASVPVVVDAGIGAPSHAAEALEMGADAVLVNTAIAVARDPVAMARAFRQAVEAGRTGFEAGLGARVFQAQATSPLTGFLEAQA</sequence>
<name>THIG_CROS8</name>
<evidence type="ECO:0000255" key="1">
    <source>
        <dbReference type="HAMAP-Rule" id="MF_00443"/>
    </source>
</evidence>
<gene>
    <name evidence="1" type="primary">thiG</name>
    <name type="ordered locus">ESA_03683</name>
</gene>